<dbReference type="EC" id="4.1.1.39" evidence="1"/>
<dbReference type="EMBL" id="CP000828">
    <property type="protein sequence ID" value="ABW26806.1"/>
    <property type="molecule type" value="Genomic_DNA"/>
</dbReference>
<dbReference type="RefSeq" id="WP_010467950.1">
    <property type="nucleotide sequence ID" value="NC_009925.1"/>
</dbReference>
<dbReference type="SMR" id="B0CCC1"/>
<dbReference type="STRING" id="329726.AM1_1785"/>
<dbReference type="KEGG" id="amr:AM1_1785"/>
<dbReference type="eggNOG" id="COG1850">
    <property type="taxonomic scope" value="Bacteria"/>
</dbReference>
<dbReference type="HOGENOM" id="CLU_031450_2_0_3"/>
<dbReference type="OrthoDB" id="9770811at2"/>
<dbReference type="Proteomes" id="UP000000268">
    <property type="component" value="Chromosome"/>
</dbReference>
<dbReference type="GO" id="GO:0031470">
    <property type="term" value="C:carboxysome"/>
    <property type="evidence" value="ECO:0007669"/>
    <property type="project" value="UniProtKB-SubCell"/>
</dbReference>
<dbReference type="GO" id="GO:0000287">
    <property type="term" value="F:magnesium ion binding"/>
    <property type="evidence" value="ECO:0007669"/>
    <property type="project" value="UniProtKB-UniRule"/>
</dbReference>
<dbReference type="GO" id="GO:0004497">
    <property type="term" value="F:monooxygenase activity"/>
    <property type="evidence" value="ECO:0007669"/>
    <property type="project" value="UniProtKB-KW"/>
</dbReference>
<dbReference type="GO" id="GO:0016984">
    <property type="term" value="F:ribulose-bisphosphate carboxylase activity"/>
    <property type="evidence" value="ECO:0007669"/>
    <property type="project" value="UniProtKB-UniRule"/>
</dbReference>
<dbReference type="GO" id="GO:0009853">
    <property type="term" value="P:photorespiration"/>
    <property type="evidence" value="ECO:0007669"/>
    <property type="project" value="UniProtKB-KW"/>
</dbReference>
<dbReference type="GO" id="GO:0019253">
    <property type="term" value="P:reductive pentose-phosphate cycle"/>
    <property type="evidence" value="ECO:0007669"/>
    <property type="project" value="UniProtKB-UniRule"/>
</dbReference>
<dbReference type="CDD" id="cd08212">
    <property type="entry name" value="RuBisCO_large_I"/>
    <property type="match status" value="1"/>
</dbReference>
<dbReference type="Gene3D" id="3.20.20.110">
    <property type="entry name" value="Ribulose bisphosphate carboxylase, large subunit, C-terminal domain"/>
    <property type="match status" value="1"/>
</dbReference>
<dbReference type="Gene3D" id="3.30.70.150">
    <property type="entry name" value="RuBisCO large subunit, N-terminal domain"/>
    <property type="match status" value="1"/>
</dbReference>
<dbReference type="HAMAP" id="MF_01338">
    <property type="entry name" value="RuBisCO_L_type1"/>
    <property type="match status" value="1"/>
</dbReference>
<dbReference type="InterPro" id="IPR033966">
    <property type="entry name" value="RuBisCO"/>
</dbReference>
<dbReference type="InterPro" id="IPR020878">
    <property type="entry name" value="RuBisCo_large_chain_AS"/>
</dbReference>
<dbReference type="InterPro" id="IPR000685">
    <property type="entry name" value="RuBisCO_lsu_C"/>
</dbReference>
<dbReference type="InterPro" id="IPR036376">
    <property type="entry name" value="RuBisCO_lsu_C_sf"/>
</dbReference>
<dbReference type="InterPro" id="IPR017443">
    <property type="entry name" value="RuBisCO_lsu_fd_N"/>
</dbReference>
<dbReference type="InterPro" id="IPR036422">
    <property type="entry name" value="RuBisCO_lsu_N_sf"/>
</dbReference>
<dbReference type="InterPro" id="IPR020888">
    <property type="entry name" value="RuBisCO_lsuI"/>
</dbReference>
<dbReference type="NCBIfam" id="NF003252">
    <property type="entry name" value="PRK04208.1"/>
    <property type="match status" value="1"/>
</dbReference>
<dbReference type="PANTHER" id="PTHR42704">
    <property type="entry name" value="RIBULOSE BISPHOSPHATE CARBOXYLASE"/>
    <property type="match status" value="1"/>
</dbReference>
<dbReference type="PANTHER" id="PTHR42704:SF17">
    <property type="entry name" value="RIBULOSE BISPHOSPHATE CARBOXYLASE LARGE CHAIN"/>
    <property type="match status" value="1"/>
</dbReference>
<dbReference type="Pfam" id="PF00016">
    <property type="entry name" value="RuBisCO_large"/>
    <property type="match status" value="1"/>
</dbReference>
<dbReference type="Pfam" id="PF02788">
    <property type="entry name" value="RuBisCO_large_N"/>
    <property type="match status" value="1"/>
</dbReference>
<dbReference type="SFLD" id="SFLDG01052">
    <property type="entry name" value="RuBisCO"/>
    <property type="match status" value="1"/>
</dbReference>
<dbReference type="SFLD" id="SFLDS00014">
    <property type="entry name" value="RuBisCO"/>
    <property type="match status" value="1"/>
</dbReference>
<dbReference type="SFLD" id="SFLDG00301">
    <property type="entry name" value="RuBisCO-like_proteins"/>
    <property type="match status" value="1"/>
</dbReference>
<dbReference type="SUPFAM" id="SSF51649">
    <property type="entry name" value="RuBisCo, C-terminal domain"/>
    <property type="match status" value="1"/>
</dbReference>
<dbReference type="SUPFAM" id="SSF54966">
    <property type="entry name" value="RuBisCO, large subunit, small (N-terminal) domain"/>
    <property type="match status" value="1"/>
</dbReference>
<dbReference type="PROSITE" id="PS00157">
    <property type="entry name" value="RUBISCO_LARGE"/>
    <property type="match status" value="1"/>
</dbReference>
<accession>B0CCC1</accession>
<protein>
    <recommendedName>
        <fullName evidence="1">Ribulose bisphosphate carboxylase large chain</fullName>
        <shortName evidence="1">RuBisCO large subunit</shortName>
        <ecNumber evidence="1">4.1.1.39</ecNumber>
    </recommendedName>
</protein>
<sequence length="476" mass="52981">MSYSQTRTQSKAGYDAGVKDYKLTYYTPDYTPKDTDILAAFRMTPQPGVPPEEAGAAVAAESSTGTWTTVWTDLLTDLDRYKGRCYDIEAVANEDNQYIAYIAYPLDLFEEGSVVNLLTSLVGNVFGFKALRALRLEDIRIPVAYMKTFQGPPHGITVERDKINKYGRPLLGCTIKPKLGLSAKNYGRAVYECLRGGLDFTKDDENINSQPFMRWRDRFLFVAEAIHKAQAETGEIKGHYLNVTAATCEEMLKRAEFAKELEMPIIMHDFITGGFTANTTLSHWCRDNGVLLHIHRAMHAVIDRQKNHGMHFRVLSKCLRMSGGDHIHTGTVVGKLEGEKGITMGFVDLLRENYVEKDLSRGIYFTQDWASMGGVMAVASGGIHVWHMPALVEIFGDDSVLQFGGGTLGHPWGCAPGATANRVALEACVQARNEGRDMAREGGDILREAAKWSPELAVALEVWKEIKFEFEAMDTV</sequence>
<comment type="function">
    <text evidence="1">RuBisCO catalyzes two reactions: the carboxylation of D-ribulose 1,5-bisphosphate, the primary event in carbon dioxide fixation, as well as the oxidative fragmentation of the pentose substrate in the photorespiration process. Both reactions occur simultaneously and in competition at the same active site.</text>
</comment>
<comment type="catalytic activity">
    <reaction evidence="1">
        <text>2 (2R)-3-phosphoglycerate + 2 H(+) = D-ribulose 1,5-bisphosphate + CO2 + H2O</text>
        <dbReference type="Rhea" id="RHEA:23124"/>
        <dbReference type="ChEBI" id="CHEBI:15377"/>
        <dbReference type="ChEBI" id="CHEBI:15378"/>
        <dbReference type="ChEBI" id="CHEBI:16526"/>
        <dbReference type="ChEBI" id="CHEBI:57870"/>
        <dbReference type="ChEBI" id="CHEBI:58272"/>
        <dbReference type="EC" id="4.1.1.39"/>
    </reaction>
</comment>
<comment type="catalytic activity">
    <reaction evidence="1">
        <text>D-ribulose 1,5-bisphosphate + O2 = 2-phosphoglycolate + (2R)-3-phosphoglycerate + 2 H(+)</text>
        <dbReference type="Rhea" id="RHEA:36631"/>
        <dbReference type="ChEBI" id="CHEBI:15378"/>
        <dbReference type="ChEBI" id="CHEBI:15379"/>
        <dbReference type="ChEBI" id="CHEBI:57870"/>
        <dbReference type="ChEBI" id="CHEBI:58033"/>
        <dbReference type="ChEBI" id="CHEBI:58272"/>
    </reaction>
</comment>
<comment type="cofactor">
    <cofactor evidence="1">
        <name>Mg(2+)</name>
        <dbReference type="ChEBI" id="CHEBI:18420"/>
    </cofactor>
    <text evidence="1">Binds 1 Mg(2+) ion per subunit.</text>
</comment>
<comment type="subunit">
    <text evidence="1">Heterohexadecamer of 8 large chains and 8 small chains; disulfide-linked. The disulfide link is formed within the large subunit homodimers.</text>
</comment>
<comment type="subcellular location">
    <subcellularLocation>
        <location evidence="1">Carboxysome</location>
    </subcellularLocation>
</comment>
<comment type="PTM">
    <text evidence="1">The disulfide bond which can form in the large chain dimeric partners within the hexadecamer appears to be associated with oxidative stress and protein turnover.</text>
</comment>
<comment type="miscellaneous">
    <text evidence="1">The basic functional RuBisCO is composed of a large chain homodimer in a 'head-to-tail' conformation. In form I RuBisCO this homodimer is arranged in a barrel-like tetramer with the small subunits forming a tetrameric 'cap' on each end of the 'barrel'.</text>
</comment>
<comment type="similarity">
    <text evidence="1">Belongs to the RuBisCO large chain family. Type I subfamily.</text>
</comment>
<organism>
    <name type="scientific">Acaryochloris marina (strain MBIC 11017)</name>
    <dbReference type="NCBI Taxonomy" id="329726"/>
    <lineage>
        <taxon>Bacteria</taxon>
        <taxon>Bacillati</taxon>
        <taxon>Cyanobacteriota</taxon>
        <taxon>Cyanophyceae</taxon>
        <taxon>Acaryochloridales</taxon>
        <taxon>Acaryochloridaceae</taxon>
        <taxon>Acaryochloris</taxon>
    </lineage>
</organism>
<name>RBL_ACAM1</name>
<reference key="1">
    <citation type="journal article" date="2008" name="Proc. Natl. Acad. Sci. U.S.A.">
        <title>Niche adaptation and genome expansion in the chlorophyll d-producing cyanobacterium Acaryochloris marina.</title>
        <authorList>
            <person name="Swingley W.D."/>
            <person name="Chen M."/>
            <person name="Cheung P.C."/>
            <person name="Conrad A.L."/>
            <person name="Dejesa L.C."/>
            <person name="Hao J."/>
            <person name="Honchak B.M."/>
            <person name="Karbach L.E."/>
            <person name="Kurdoglu A."/>
            <person name="Lahiri S."/>
            <person name="Mastrian S.D."/>
            <person name="Miyashita H."/>
            <person name="Page L."/>
            <person name="Ramakrishna P."/>
            <person name="Satoh S."/>
            <person name="Sattley W.M."/>
            <person name="Shimada Y."/>
            <person name="Taylor H.L."/>
            <person name="Tomo T."/>
            <person name="Tsuchiya T."/>
            <person name="Wang Z.T."/>
            <person name="Raymond J."/>
            <person name="Mimuro M."/>
            <person name="Blankenship R.E."/>
            <person name="Touchman J.W."/>
        </authorList>
    </citation>
    <scope>NUCLEOTIDE SEQUENCE [LARGE SCALE GENOMIC DNA]</scope>
    <source>
        <strain>MBIC 11017</strain>
    </source>
</reference>
<keyword id="KW-1283">Bacterial microcompartment</keyword>
<keyword id="KW-0113">Calvin cycle</keyword>
<keyword id="KW-0120">Carbon dioxide fixation</keyword>
<keyword id="KW-1282">Carboxysome</keyword>
<keyword id="KW-1015">Disulfide bond</keyword>
<keyword id="KW-0456">Lyase</keyword>
<keyword id="KW-0460">Magnesium</keyword>
<keyword id="KW-0479">Metal-binding</keyword>
<keyword id="KW-0503">Monooxygenase</keyword>
<keyword id="KW-0560">Oxidoreductase</keyword>
<keyword id="KW-0601">Photorespiration</keyword>
<keyword id="KW-0602">Photosynthesis</keyword>
<keyword id="KW-1185">Reference proteome</keyword>
<proteinExistence type="inferred from homology"/>
<evidence type="ECO:0000255" key="1">
    <source>
        <dbReference type="HAMAP-Rule" id="MF_01338"/>
    </source>
</evidence>
<feature type="chain" id="PRO_1000142747" description="Ribulose bisphosphate carboxylase large chain">
    <location>
        <begin position="1"/>
        <end position="476"/>
    </location>
</feature>
<feature type="active site" description="Proton acceptor" evidence="1">
    <location>
        <position position="176"/>
    </location>
</feature>
<feature type="active site" description="Proton acceptor" evidence="1">
    <location>
        <position position="295"/>
    </location>
</feature>
<feature type="binding site" description="in homodimeric partner" evidence="1">
    <location>
        <position position="124"/>
    </location>
    <ligand>
        <name>substrate</name>
    </ligand>
</feature>
<feature type="binding site" evidence="1">
    <location>
        <position position="174"/>
    </location>
    <ligand>
        <name>substrate</name>
    </ligand>
</feature>
<feature type="binding site" evidence="1">
    <location>
        <position position="178"/>
    </location>
    <ligand>
        <name>substrate</name>
    </ligand>
</feature>
<feature type="binding site" description="via carbamate group" evidence="1">
    <location>
        <position position="202"/>
    </location>
    <ligand>
        <name>Mg(2+)</name>
        <dbReference type="ChEBI" id="CHEBI:18420"/>
    </ligand>
</feature>
<feature type="binding site" evidence="1">
    <location>
        <position position="204"/>
    </location>
    <ligand>
        <name>Mg(2+)</name>
        <dbReference type="ChEBI" id="CHEBI:18420"/>
    </ligand>
</feature>
<feature type="binding site" evidence="1">
    <location>
        <position position="205"/>
    </location>
    <ligand>
        <name>Mg(2+)</name>
        <dbReference type="ChEBI" id="CHEBI:18420"/>
    </ligand>
</feature>
<feature type="binding site" evidence="1">
    <location>
        <position position="296"/>
    </location>
    <ligand>
        <name>substrate</name>
    </ligand>
</feature>
<feature type="binding site" evidence="1">
    <location>
        <position position="328"/>
    </location>
    <ligand>
        <name>substrate</name>
    </ligand>
</feature>
<feature type="binding site" evidence="1">
    <location>
        <position position="380"/>
    </location>
    <ligand>
        <name>substrate</name>
    </ligand>
</feature>
<feature type="site" description="Transition state stabilizer" evidence="1">
    <location>
        <position position="335"/>
    </location>
</feature>
<feature type="modified residue" description="N6-carboxylysine" evidence="1">
    <location>
        <position position="202"/>
    </location>
</feature>
<feature type="disulfide bond" description="Interchain; in linked form" evidence="1">
    <location>
        <position position="248"/>
    </location>
</feature>
<gene>
    <name evidence="1" type="primary">cbbL</name>
    <name evidence="1" type="synonym">rbcL</name>
    <name type="ordered locus">AM1_1785</name>
</gene>